<accession>P63091</accession>
<accession>P04895</accession>
<accession>Q12927</accession>
<dbReference type="EMBL" id="Z12168">
    <property type="protein sequence ID" value="CAA78161.1"/>
    <property type="molecule type" value="mRNA"/>
</dbReference>
<dbReference type="PIR" id="S33458">
    <property type="entry name" value="S33458"/>
</dbReference>
<dbReference type="RefSeq" id="NP_001003263.1">
    <property type="nucleotide sequence ID" value="NM_001003263.1"/>
</dbReference>
<dbReference type="SMR" id="P63091"/>
<dbReference type="FunCoup" id="P63091">
    <property type="interactions" value="484"/>
</dbReference>
<dbReference type="STRING" id="9615.ENSCAFP00000041597"/>
<dbReference type="SwissPalm" id="P63091"/>
<dbReference type="GeneID" id="403943"/>
<dbReference type="KEGG" id="cfa:403943"/>
<dbReference type="CTD" id="2778"/>
<dbReference type="InParanoid" id="P63091"/>
<dbReference type="OrthoDB" id="1806at33554"/>
<dbReference type="Proteomes" id="UP000002254">
    <property type="component" value="Unplaced"/>
</dbReference>
<dbReference type="Proteomes" id="UP000694429">
    <property type="component" value="Unplaced"/>
</dbReference>
<dbReference type="Proteomes" id="UP000694542">
    <property type="component" value="Unplaced"/>
</dbReference>
<dbReference type="Proteomes" id="UP000805418">
    <property type="component" value="Unplaced"/>
</dbReference>
<dbReference type="GO" id="GO:0005737">
    <property type="term" value="C:cytoplasm"/>
    <property type="evidence" value="ECO:0000318"/>
    <property type="project" value="GO_Central"/>
</dbReference>
<dbReference type="GO" id="GO:0005834">
    <property type="term" value="C:heterotrimeric G-protein complex"/>
    <property type="evidence" value="ECO:0000318"/>
    <property type="project" value="GO_Central"/>
</dbReference>
<dbReference type="GO" id="GO:0010856">
    <property type="term" value="F:adenylate cyclase activator activity"/>
    <property type="evidence" value="ECO:0000250"/>
    <property type="project" value="UniProtKB"/>
</dbReference>
<dbReference type="GO" id="GO:0031698">
    <property type="term" value="F:beta-2 adrenergic receptor binding"/>
    <property type="evidence" value="ECO:0000318"/>
    <property type="project" value="GO_Central"/>
</dbReference>
<dbReference type="GO" id="GO:0051430">
    <property type="term" value="F:corticotropin-releasing hormone receptor 1 binding"/>
    <property type="evidence" value="ECO:0000318"/>
    <property type="project" value="GO_Central"/>
</dbReference>
<dbReference type="GO" id="GO:0031748">
    <property type="term" value="F:D1 dopamine receptor binding"/>
    <property type="evidence" value="ECO:0000318"/>
    <property type="project" value="GO_Central"/>
</dbReference>
<dbReference type="GO" id="GO:0031683">
    <property type="term" value="F:G-protein beta/gamma-subunit complex binding"/>
    <property type="evidence" value="ECO:0000318"/>
    <property type="project" value="GO_Central"/>
</dbReference>
<dbReference type="GO" id="GO:0005525">
    <property type="term" value="F:GTP binding"/>
    <property type="evidence" value="ECO:0007669"/>
    <property type="project" value="UniProtKB-KW"/>
</dbReference>
<dbReference type="GO" id="GO:0003924">
    <property type="term" value="F:GTPase activity"/>
    <property type="evidence" value="ECO:0000318"/>
    <property type="project" value="GO_Central"/>
</dbReference>
<dbReference type="GO" id="GO:0005159">
    <property type="term" value="F:insulin-like growth factor receptor binding"/>
    <property type="evidence" value="ECO:0000318"/>
    <property type="project" value="GO_Central"/>
</dbReference>
<dbReference type="GO" id="GO:0035255">
    <property type="term" value="F:ionotropic glutamate receptor binding"/>
    <property type="evidence" value="ECO:0000318"/>
    <property type="project" value="GO_Central"/>
</dbReference>
<dbReference type="GO" id="GO:0046872">
    <property type="term" value="F:metal ion binding"/>
    <property type="evidence" value="ECO:0007669"/>
    <property type="project" value="UniProtKB-KW"/>
</dbReference>
<dbReference type="GO" id="GO:0031852">
    <property type="term" value="F:mu-type opioid receptor binding"/>
    <property type="evidence" value="ECO:0000318"/>
    <property type="project" value="GO_Central"/>
</dbReference>
<dbReference type="GO" id="GO:0071880">
    <property type="term" value="P:adenylate cyclase-activating adrenergic receptor signaling pathway"/>
    <property type="evidence" value="ECO:0000250"/>
    <property type="project" value="UniProtKB"/>
</dbReference>
<dbReference type="GO" id="GO:0007191">
    <property type="term" value="P:adenylate cyclase-activating dopamine receptor signaling pathway"/>
    <property type="evidence" value="ECO:0000318"/>
    <property type="project" value="GO_Central"/>
</dbReference>
<dbReference type="GO" id="GO:0007189">
    <property type="term" value="P:adenylate cyclase-activating G protein-coupled receptor signaling pathway"/>
    <property type="evidence" value="ECO:0000250"/>
    <property type="project" value="UniProtKB"/>
</dbReference>
<dbReference type="GO" id="GO:0007606">
    <property type="term" value="P:sensory perception of chemical stimulus"/>
    <property type="evidence" value="ECO:0000318"/>
    <property type="project" value="GO_Central"/>
</dbReference>
<dbReference type="CDD" id="cd00066">
    <property type="entry name" value="G-alpha"/>
    <property type="match status" value="1"/>
</dbReference>
<dbReference type="FunFam" id="1.10.400.10:FF:000003">
    <property type="entry name" value="Guanine nucleotide-binding protein G(S) subunit alpha"/>
    <property type="match status" value="1"/>
</dbReference>
<dbReference type="FunFam" id="3.40.50.300:FF:006178">
    <property type="entry name" value="Guanine nucleotide-binding protein G(s) subunit alpha isoforms short"/>
    <property type="match status" value="2"/>
</dbReference>
<dbReference type="Gene3D" id="1.10.400.10">
    <property type="entry name" value="GI Alpha 1, domain 2-like"/>
    <property type="match status" value="1"/>
</dbReference>
<dbReference type="Gene3D" id="3.40.50.300">
    <property type="entry name" value="P-loop containing nucleotide triphosphate hydrolases"/>
    <property type="match status" value="1"/>
</dbReference>
<dbReference type="InterPro" id="IPR000367">
    <property type="entry name" value="Gprotein_alpha_S"/>
</dbReference>
<dbReference type="InterPro" id="IPR001019">
    <property type="entry name" value="Gprotein_alpha_su"/>
</dbReference>
<dbReference type="InterPro" id="IPR011025">
    <property type="entry name" value="GproteinA_insert"/>
</dbReference>
<dbReference type="InterPro" id="IPR027417">
    <property type="entry name" value="P-loop_NTPase"/>
</dbReference>
<dbReference type="PANTHER" id="PTHR10218">
    <property type="entry name" value="GTP-BINDING PROTEIN ALPHA SUBUNIT"/>
    <property type="match status" value="1"/>
</dbReference>
<dbReference type="PANTHER" id="PTHR10218:SF357">
    <property type="entry name" value="GUANINE NUCLEOTIDE-BINDING PROTEIN G(S) SUBUNIT ALPHA"/>
    <property type="match status" value="1"/>
</dbReference>
<dbReference type="Pfam" id="PF00503">
    <property type="entry name" value="G-alpha"/>
    <property type="match status" value="1"/>
</dbReference>
<dbReference type="PRINTS" id="PR00318">
    <property type="entry name" value="GPROTEINA"/>
</dbReference>
<dbReference type="PRINTS" id="PR00443">
    <property type="entry name" value="GPROTEINAS"/>
</dbReference>
<dbReference type="SMART" id="SM00275">
    <property type="entry name" value="G_alpha"/>
    <property type="match status" value="1"/>
</dbReference>
<dbReference type="SUPFAM" id="SSF52540">
    <property type="entry name" value="P-loop containing nucleoside triphosphate hydrolases"/>
    <property type="match status" value="1"/>
</dbReference>
<dbReference type="SUPFAM" id="SSF47895">
    <property type="entry name" value="Transducin (alpha subunit), insertion domain"/>
    <property type="match status" value="1"/>
</dbReference>
<dbReference type="PROSITE" id="PS51882">
    <property type="entry name" value="G_ALPHA"/>
    <property type="match status" value="1"/>
</dbReference>
<reference key="1">
    <citation type="submission" date="1992-06" db="EMBL/GenBank/DDBJ databases">
        <title>cDNA sequence for alpha subunit of stimulatory guanine nucleotide binding protein from canine heart.</title>
        <authorList>
            <person name="Ishikawa Y."/>
            <person name="Homcy C.J."/>
        </authorList>
    </citation>
    <scope>NUCLEOTIDE SEQUENCE [MRNA]</scope>
    <source>
        <tissue>Heart</tissue>
    </source>
</reference>
<evidence type="ECO:0000250" key="1"/>
<evidence type="ECO:0000250" key="2">
    <source>
        <dbReference type="UniProtKB" id="P04896"/>
    </source>
</evidence>
<evidence type="ECO:0000250" key="3">
    <source>
        <dbReference type="UniProtKB" id="P63092"/>
    </source>
</evidence>
<evidence type="ECO:0000250" key="4">
    <source>
        <dbReference type="UniProtKB" id="P63094"/>
    </source>
</evidence>
<evidence type="ECO:0000255" key="5">
    <source>
        <dbReference type="PROSITE-ProRule" id="PRU01230"/>
    </source>
</evidence>
<evidence type="ECO:0000256" key="6">
    <source>
        <dbReference type="SAM" id="MobiDB-lite"/>
    </source>
</evidence>
<evidence type="ECO:0000305" key="7"/>
<feature type="initiator methionine" description="Removed">
    <location>
        <position position="1"/>
    </location>
</feature>
<feature type="chain" id="PRO_0000203718" description="Guanine nucleotide-binding protein G(s) subunit alpha">
    <location>
        <begin position="2"/>
        <end position="394"/>
    </location>
</feature>
<feature type="domain" description="G-alpha" evidence="5">
    <location>
        <begin position="39"/>
        <end position="394"/>
    </location>
</feature>
<feature type="region of interest" description="Disordered" evidence="6">
    <location>
        <begin position="1"/>
        <end position="23"/>
    </location>
</feature>
<feature type="region of interest" description="G1 motif" evidence="5">
    <location>
        <begin position="42"/>
        <end position="55"/>
    </location>
</feature>
<feature type="region of interest" description="Disordered" evidence="6">
    <location>
        <begin position="68"/>
        <end position="91"/>
    </location>
</feature>
<feature type="region of interest" description="G2 motif" evidence="5">
    <location>
        <begin position="196"/>
        <end position="204"/>
    </location>
</feature>
<feature type="region of interest" description="G3 motif" evidence="5">
    <location>
        <begin position="219"/>
        <end position="228"/>
    </location>
</feature>
<feature type="region of interest" description="G4 motif" evidence="5">
    <location>
        <begin position="288"/>
        <end position="295"/>
    </location>
</feature>
<feature type="region of interest" description="G5 motif" evidence="5">
    <location>
        <begin position="364"/>
        <end position="369"/>
    </location>
</feature>
<feature type="compositionally biased region" description="Basic and acidic residues" evidence="6">
    <location>
        <begin position="8"/>
        <end position="23"/>
    </location>
</feature>
<feature type="binding site" evidence="2">
    <location>
        <begin position="47"/>
        <end position="55"/>
    </location>
    <ligand>
        <name>GTP</name>
        <dbReference type="ChEBI" id="CHEBI:37565"/>
    </ligand>
</feature>
<feature type="binding site" evidence="2">
    <location>
        <position position="54"/>
    </location>
    <ligand>
        <name>Mg(2+)</name>
        <dbReference type="ChEBI" id="CHEBI:18420"/>
    </ligand>
</feature>
<feature type="binding site" evidence="2">
    <location>
        <begin position="197"/>
        <end position="204"/>
    </location>
    <ligand>
        <name>GTP</name>
        <dbReference type="ChEBI" id="CHEBI:37565"/>
    </ligand>
</feature>
<feature type="binding site" evidence="2">
    <location>
        <position position="204"/>
    </location>
    <ligand>
        <name>Mg(2+)</name>
        <dbReference type="ChEBI" id="CHEBI:18420"/>
    </ligand>
</feature>
<feature type="binding site" evidence="2">
    <location>
        <begin position="223"/>
        <end position="227"/>
    </location>
    <ligand>
        <name>GTP</name>
        <dbReference type="ChEBI" id="CHEBI:37565"/>
    </ligand>
</feature>
<feature type="binding site" evidence="2">
    <location>
        <begin position="292"/>
        <end position="295"/>
    </location>
    <ligand>
        <name>GTP</name>
        <dbReference type="ChEBI" id="CHEBI:37565"/>
    </ligand>
</feature>
<feature type="binding site" evidence="2">
    <location>
        <position position="366"/>
    </location>
    <ligand>
        <name>GTP</name>
        <dbReference type="ChEBI" id="CHEBI:37565"/>
    </ligand>
</feature>
<feature type="lipid moiety-binding region" description="N-palmitoyl glycine" evidence="2">
    <location>
        <position position="2"/>
    </location>
</feature>
<feature type="lipid moiety-binding region" description="S-palmitoyl cysteine" evidence="1">
    <location>
        <position position="3"/>
    </location>
</feature>
<gene>
    <name type="primary">GNAS</name>
    <name type="synonym">GNAS1</name>
</gene>
<proteinExistence type="evidence at transcript level"/>
<keyword id="KW-1003">Cell membrane</keyword>
<keyword id="KW-0342">GTP-binding</keyword>
<keyword id="KW-0449">Lipoprotein</keyword>
<keyword id="KW-0460">Magnesium</keyword>
<keyword id="KW-0472">Membrane</keyword>
<keyword id="KW-0479">Metal-binding</keyword>
<keyword id="KW-0547">Nucleotide-binding</keyword>
<keyword id="KW-0564">Palmitate</keyword>
<keyword id="KW-1185">Reference proteome</keyword>
<keyword id="KW-0807">Transducer</keyword>
<protein>
    <recommendedName>
        <fullName>Guanine nucleotide-binding protein G(s) subunit alpha</fullName>
    </recommendedName>
    <alternativeName>
        <fullName>Adenylate cyclase-stimulating G alpha protein</fullName>
    </alternativeName>
</protein>
<comment type="function">
    <text evidence="3">Guanine nucleotide-binding proteins (G proteins) function as transducers in numerous signaling pathways controlled by G protein-coupled receptors (GPCRs). Signaling involves the activation of adenylyl cyclases, resulting in increased levels of the signaling molecule cAMP. GNAS functions downstream of several GPCRs, including beta-adrenergic receptors. Stimulates the Ras signaling pathway via RAPGEF2.</text>
</comment>
<comment type="subunit">
    <text evidence="2 3">Heterotrimeric G proteins are composed of 3 units; alpha, beta and gamma. The alpha chain contains the guanine nucleotide binding site (By similarity). Interacts with CRY1; the interaction may block GPCR-mediated regulation of cAMP concentrations. Interacts with ADCY6 and stimulates its adenylyl cyclase activity (By similarity). Interacts with ADCY2 and ADCY5 (By similarity). Stimulates the ADCY5 adenylyl cyclase activity (By similarity). Interaction with SASH1 (By similarity).</text>
</comment>
<comment type="subcellular location">
    <subcellularLocation>
        <location evidence="4">Cell membrane</location>
        <topology evidence="4">Lipid-anchor</topology>
    </subcellularLocation>
</comment>
<comment type="similarity">
    <text evidence="7">Belongs to the G-alpha family. G(s) subfamily.</text>
</comment>
<organism>
    <name type="scientific">Canis lupus familiaris</name>
    <name type="common">Dog</name>
    <name type="synonym">Canis familiaris</name>
    <dbReference type="NCBI Taxonomy" id="9615"/>
    <lineage>
        <taxon>Eukaryota</taxon>
        <taxon>Metazoa</taxon>
        <taxon>Chordata</taxon>
        <taxon>Craniata</taxon>
        <taxon>Vertebrata</taxon>
        <taxon>Euteleostomi</taxon>
        <taxon>Mammalia</taxon>
        <taxon>Eutheria</taxon>
        <taxon>Laurasiatheria</taxon>
        <taxon>Carnivora</taxon>
        <taxon>Caniformia</taxon>
        <taxon>Canidae</taxon>
        <taxon>Canis</taxon>
    </lineage>
</organism>
<sequence length="394" mass="45665">MGCLGNSKTEDQRNEEKAQREANKKIEKQLQKDKQVYRATHRLLLLGAGESGKSTIVKQMRILHVNGFNGEGGEEDPQAARSNSDGEKATKVQDIKNNLKEAIETIVAAMSNLVPPVELANPENQFRVDYILSVMNVPDFDFPPEFYEHAKALWEDEGVRACYERSNEYQLIDCAQYFLDKIDVIKQADYVPSDQDLLRCRVLTSGIFETKFQVDKVNFHMFDVGGQRDERRKWIQCFNDVTAIIFVVASSSYNMVIREDNQTNRLQEALNLFKSIWNNRWLRTISVILFLNKQDLLAEKVLAGKSKIEDYFPEFARYTTPEDATPEPGEDPRVTRAKYFIRDEFLRISTASGDGRHYCYPHFTCAVDTENIRRVFNDCRDIIQRMHLRQYELL</sequence>
<name>GNAS_CANLF</name>